<feature type="chain" id="PRO_0000219432" description="Talin-2">
    <location>
        <begin position="1"/>
        <end position="2375"/>
    </location>
</feature>
<feature type="domain" description="FERM" evidence="3">
    <location>
        <begin position="88"/>
        <end position="406"/>
    </location>
</feature>
<feature type="domain" description="I/LWEQ" evidence="4">
    <location>
        <begin position="2205"/>
        <end position="2375"/>
    </location>
</feature>
<feature type="region of interest" description="Interaction with PIP5K1C" evidence="1">
    <location>
        <begin position="312"/>
        <end position="406"/>
    </location>
</feature>
<feature type="modified residue" description="Phosphoserine" evidence="7">
    <location>
        <position position="428"/>
    </location>
</feature>
<feature type="modified residue" description="Phosphoserine" evidence="7">
    <location>
        <position position="450"/>
    </location>
</feature>
<feature type="modified residue" description="Phosphoserine" evidence="7">
    <location>
        <position position="624"/>
    </location>
</feature>
<feature type="modified residue" description="Phosphoserine" evidence="2">
    <location>
        <position position="1024"/>
    </location>
</feature>
<feature type="modified residue" description="Phosphotyrosine" evidence="6">
    <location>
        <position position="1666"/>
    </location>
</feature>
<feature type="sequence conflict" description="In Ref. 2; BAC34927." evidence="5" ref="2">
    <original>V</original>
    <variation>K</variation>
    <location>
        <position position="102"/>
    </location>
</feature>
<feature type="sequence conflict" description="In Ref. 3; AAQ05019." evidence="5" ref="3">
    <original>R</original>
    <variation>Q</variation>
    <location>
        <position position="432"/>
    </location>
</feature>
<feature type="sequence conflict" description="In Ref. 3; AAQ05019." evidence="5" ref="3">
    <original>E</original>
    <variation>K</variation>
    <location>
        <position position="447"/>
    </location>
</feature>
<feature type="sequence conflict" description="In Ref. 3; AAQ05019." evidence="5" ref="3">
    <original>M</original>
    <variation>V</variation>
    <location>
        <position position="1003"/>
    </location>
</feature>
<feature type="sequence conflict" description="In Ref. 3; AAQ05019." evidence="5" ref="3">
    <original>L</original>
    <variation>P</variation>
    <location>
        <position position="1030"/>
    </location>
</feature>
<feature type="sequence conflict" description="In Ref. 3; AAQ05019." evidence="5" ref="3">
    <original>M</original>
    <variation>I</variation>
    <location>
        <position position="1755"/>
    </location>
</feature>
<feature type="sequence conflict" description="In Ref. 3; AAQ05019." evidence="5" ref="3">
    <original>A</original>
    <variation>V</variation>
    <location>
        <position position="1775"/>
    </location>
</feature>
<feature type="sequence conflict" description="In Ref. 3; AAQ05019." evidence="5" ref="3">
    <original>V</original>
    <variation>Q</variation>
    <location>
        <position position="1792"/>
    </location>
</feature>
<feature type="sequence conflict" description="In Ref. 3; AAQ05019." evidence="5" ref="3">
    <original>A</original>
    <variation>S</variation>
    <location>
        <position position="1795"/>
    </location>
</feature>
<feature type="sequence conflict" description="In Ref. 3; AAQ05019." evidence="5" ref="3">
    <original>I</original>
    <variation>V</variation>
    <location>
        <position position="1816"/>
    </location>
</feature>
<feature type="sequence conflict" description="In Ref. 3; AAQ05019." evidence="5" ref="3">
    <original>V</original>
    <variation>A</variation>
    <location>
        <position position="2047"/>
    </location>
</feature>
<feature type="helix" evidence="8">
    <location>
        <begin position="211"/>
        <end position="226"/>
    </location>
</feature>
<feature type="helix" evidence="8">
    <location>
        <begin position="234"/>
        <end position="249"/>
    </location>
</feature>
<feature type="turn" evidence="8">
    <location>
        <begin position="254"/>
        <end position="256"/>
    </location>
</feature>
<feature type="helix" evidence="8">
    <location>
        <begin position="264"/>
        <end position="266"/>
    </location>
</feature>
<feature type="helix" evidence="8">
    <location>
        <begin position="270"/>
        <end position="272"/>
    </location>
</feature>
<feature type="helix" evidence="8">
    <location>
        <begin position="278"/>
        <end position="288"/>
    </location>
</feature>
<feature type="turn" evidence="8">
    <location>
        <begin position="289"/>
        <end position="291"/>
    </location>
</feature>
<feature type="helix" evidence="8">
    <location>
        <begin position="294"/>
        <end position="307"/>
    </location>
</feature>
<feature type="turn" evidence="8">
    <location>
        <begin position="309"/>
        <end position="312"/>
    </location>
</feature>
<feature type="strand" evidence="8">
    <location>
        <begin position="314"/>
        <end position="321"/>
    </location>
</feature>
<feature type="strand" evidence="8">
    <location>
        <begin position="328"/>
        <end position="335"/>
    </location>
</feature>
<feature type="strand" evidence="8">
    <location>
        <begin position="337"/>
        <end position="343"/>
    </location>
</feature>
<feature type="turn" evidence="8">
    <location>
        <begin position="345"/>
        <end position="347"/>
    </location>
</feature>
<feature type="strand" evidence="8">
    <location>
        <begin position="350"/>
        <end position="355"/>
    </location>
</feature>
<feature type="helix" evidence="8">
    <location>
        <begin position="356"/>
        <end position="358"/>
    </location>
</feature>
<feature type="strand" evidence="8">
    <location>
        <begin position="361"/>
        <end position="365"/>
    </location>
</feature>
<feature type="strand" evidence="8">
    <location>
        <begin position="368"/>
        <end position="372"/>
    </location>
</feature>
<feature type="helix" evidence="8">
    <location>
        <begin position="374"/>
        <end position="376"/>
    </location>
</feature>
<feature type="strand" evidence="8">
    <location>
        <begin position="381"/>
        <end position="384"/>
    </location>
</feature>
<feature type="helix" evidence="8">
    <location>
        <begin position="388"/>
        <end position="407"/>
    </location>
</feature>
<sequence length="2375" mass="253621">MVALSLKICVRHCNVVKTMQFEPSTAVYDACRVIRERVPEAQTGQASDYGLFLSDEDPRKGIWLEAGRTLDYYMLRNGDILEYKKKQRPQKIRMLDGSVKTVMVDDSKTVGELLVTICSRIGITNYEEYSLIQETIEEKKEEGTGTLKKDRTLLRDERKMEKLKAKLHTDDDLNWLDHSRTFREQGVDENETLLLRRKFFYSDQNVDSRDPVQLNLLYVQARDDILNGSHPVSFEKACEFGGFQAQIQFGPHVEHKHKPGFLDLKEFLPKEYIKQRGAEKRIFQEHKNCGEMSEIEAKVKYVKLARSLRTYGVSFFLVKEKMKGKNKLVPRLLGITKDSVMRVDEKTKEVLQEWPLTTVKRWAASPKSFTLDFGEYQESYYSVQTTEGEQISQLIAGYIDIILKKKQSKDRFGLEGDEESTMLEESVSPKKRSTILQQQFNRTGKAEHGSVALPAVMRSGSSGPETFNVGSMPSPQQQVMVGQMHRGHMPPLTSAQQALMGTINTSMHAVQQAQDDLSELDSLPPLGQDMASRVWVQNKVDESKHEIHSQVDAITAGTASVVNLTAGDPADTDYTAVGCAITTISSNLTEMSKGVKLLAALMDDDVGSGEDLLRAARTLAGAVSDLLKAVQPTSGEPRQTVLTAAGSIGQASGDLLRQIGENETDERFQDVLMSLAKAVANAAAMLVLKAKNVAQVAEDTVLQNRVIAAATQCALSTSQLVACAKVVSPTISSPVCQEQLIEAGKLVDRSVENCVRACQAATSDSELLKQVSAAASVVSQALHDLLQHVRQFASRGEPIGRYDQATDTIMCVTESIFSSMGDAGEMVRQARVLAQATSDLVNAMRSDAEAEIDMENSKKLLAAAKLLADSTARMVEAAKGAAANPENEDQQQRLREAAEGLRVATNAAAQNAIKKKIVNRLEVAAKQAAAAATQTIAASQNAAISNKNPSAQQQLVQSCKAVADHIPQLVQGVRGSQAQAEDLSAQLALIISSQNFLQPGSKMVSSAKAAVPTVSDQAAAMQLSQCAKNLATSLAELRTASQKAHEACGPMEIDSALNTVQTLKNELQDAKMAAAESQLKPLPGETLEKCAQDLGSTSKGVGSSMAQLLTCAAQGNEHYTGVAARETAQALKTLAQAARGVAASTNDPEAAHAMLDSARDVMEGSAMLIQEAKQALIAPGDTESQQRLAQVAKAVSHSLNNCVNCLPGQKDVDVALKSIGEASKKLLVDSLPPSTKPFQEAQSELNQAAADLNQSAGEVVHATRGQSGELAAASGKFSDDFDEFLDAGIEMAGQAQTKEDQMQVIGNLKNISMASSKLLLAAKSLSVDPGAPNAKNLLAAAARAVTESINQLIMLCTQQAPGQKECDNALRELETVKGMLENPNEPVSDLSYFDCIESVMENSKVLGESMAGISQNAKTGDLPAFGECVGIASKALCGLTEAAAQAAYLVGISDPNSQAGHQGLVDPIQFARANQAIQMACQNLVDPGSSPSQVLSAATIVAKHTSALCNACRIASSKTANPVAKRHFVQSAKEVANSTANLVKTIKALDGDFSEDNRNKCRIATTPLIEAVENLTAFASNPEFASIPAQISSEGSQAQEPILVSAKTMLESSSYLIRTARSLAINPKDPPTWSVLAGHSHTVSDSIKSLITSIRDKAPGQRECDYSIDGINRCIRDIEQASLAAVSQSLATRDDISVEALQEQLTSVVQEIGHLIDPIATAARGEAAQLGHKVTQLASYFEPLILAAVGVASKMLDHQQQMTVLDQTKTLAESALQMLYAAKEGGGNPKAVHTAPEPKGTFVDYQTTVVKYSKAIAVTAQEMIGFQIRTRVQDLGHGCIFLVQKAGALQVCPTDSYTKRELIECARSVTEKVSLVLSALQAGNKGTQACITAATAVSGIIADLDTTIMFATAGTLNAENGETFADHRENILKTAKALVEDTKLLVSGAASTPDKLAQAAQSSAATITQLAEVVKLGAASLGSNDPETQVVLINAIKDVAKALSDLIGATKGAASKPADDPSMYQLKGAAKVMVTNVTSLLKTVKAVEDEATRGTRALEATIEYIKQELTVFQSKDIPEKTSSPEESIRMTKGITMATAKAVAAGNSCRQEDVIATANLSRKAVSDMLIACKQASFYPDVSEEVRTRALRYGTECTLGYLDLLEHVLVILQKPTPELKHQLAAFSKRVAGAVTELIQAAEAMKGTEWVDPEDPTVIAETELLGAAASIEAAAKKLEQLKPRAKPKQADETLDFEEQILEAAKSIAAATSALVKSASAAQRELVAQGKVGSIPANAADDGQWSQGLISAARMVAAATSSLCEAANASVQGHASEEKLISSAKQVAASTAQLLVACKVKADQDSEAMKRLQAAGNAV</sequence>
<reference key="1">
    <citation type="journal article" date="2009" name="PLoS Biol.">
        <title>Lineage-specific biology revealed by a finished genome assembly of the mouse.</title>
        <authorList>
            <person name="Church D.M."/>
            <person name="Goodstadt L."/>
            <person name="Hillier L.W."/>
            <person name="Zody M.C."/>
            <person name="Goldstein S."/>
            <person name="She X."/>
            <person name="Bult C.J."/>
            <person name="Agarwala R."/>
            <person name="Cherry J.L."/>
            <person name="DiCuccio M."/>
            <person name="Hlavina W."/>
            <person name="Kapustin Y."/>
            <person name="Meric P."/>
            <person name="Maglott D."/>
            <person name="Birtle Z."/>
            <person name="Marques A.C."/>
            <person name="Graves T."/>
            <person name="Zhou S."/>
            <person name="Teague B."/>
            <person name="Potamousis K."/>
            <person name="Churas C."/>
            <person name="Place M."/>
            <person name="Herschleb J."/>
            <person name="Runnheim R."/>
            <person name="Forrest D."/>
            <person name="Amos-Landgraf J."/>
            <person name="Schwartz D.C."/>
            <person name="Cheng Z."/>
            <person name="Lindblad-Toh K."/>
            <person name="Eichler E.E."/>
            <person name="Ponting C.P."/>
        </authorList>
    </citation>
    <scope>NUCLEOTIDE SEQUENCE [LARGE SCALE GENOMIC DNA]</scope>
    <source>
        <strain>C57BL/6J</strain>
    </source>
</reference>
<reference key="2">
    <citation type="journal article" date="2005" name="Science">
        <title>The transcriptional landscape of the mammalian genome.</title>
        <authorList>
            <person name="Carninci P."/>
            <person name="Kasukawa T."/>
            <person name="Katayama S."/>
            <person name="Gough J."/>
            <person name="Frith M.C."/>
            <person name="Maeda N."/>
            <person name="Oyama R."/>
            <person name="Ravasi T."/>
            <person name="Lenhard B."/>
            <person name="Wells C."/>
            <person name="Kodzius R."/>
            <person name="Shimokawa K."/>
            <person name="Bajic V.B."/>
            <person name="Brenner S.E."/>
            <person name="Batalov S."/>
            <person name="Forrest A.R."/>
            <person name="Zavolan M."/>
            <person name="Davis M.J."/>
            <person name="Wilming L.G."/>
            <person name="Aidinis V."/>
            <person name="Allen J.E."/>
            <person name="Ambesi-Impiombato A."/>
            <person name="Apweiler R."/>
            <person name="Aturaliya R.N."/>
            <person name="Bailey T.L."/>
            <person name="Bansal M."/>
            <person name="Baxter L."/>
            <person name="Beisel K.W."/>
            <person name="Bersano T."/>
            <person name="Bono H."/>
            <person name="Chalk A.M."/>
            <person name="Chiu K.P."/>
            <person name="Choudhary V."/>
            <person name="Christoffels A."/>
            <person name="Clutterbuck D.R."/>
            <person name="Crowe M.L."/>
            <person name="Dalla E."/>
            <person name="Dalrymple B.P."/>
            <person name="de Bono B."/>
            <person name="Della Gatta G."/>
            <person name="di Bernardo D."/>
            <person name="Down T."/>
            <person name="Engstrom P."/>
            <person name="Fagiolini M."/>
            <person name="Faulkner G."/>
            <person name="Fletcher C.F."/>
            <person name="Fukushima T."/>
            <person name="Furuno M."/>
            <person name="Futaki S."/>
            <person name="Gariboldi M."/>
            <person name="Georgii-Hemming P."/>
            <person name="Gingeras T.R."/>
            <person name="Gojobori T."/>
            <person name="Green R.E."/>
            <person name="Gustincich S."/>
            <person name="Harbers M."/>
            <person name="Hayashi Y."/>
            <person name="Hensch T.K."/>
            <person name="Hirokawa N."/>
            <person name="Hill D."/>
            <person name="Huminiecki L."/>
            <person name="Iacono M."/>
            <person name="Ikeo K."/>
            <person name="Iwama A."/>
            <person name="Ishikawa T."/>
            <person name="Jakt M."/>
            <person name="Kanapin A."/>
            <person name="Katoh M."/>
            <person name="Kawasawa Y."/>
            <person name="Kelso J."/>
            <person name="Kitamura H."/>
            <person name="Kitano H."/>
            <person name="Kollias G."/>
            <person name="Krishnan S.P."/>
            <person name="Kruger A."/>
            <person name="Kummerfeld S.K."/>
            <person name="Kurochkin I.V."/>
            <person name="Lareau L.F."/>
            <person name="Lazarevic D."/>
            <person name="Lipovich L."/>
            <person name="Liu J."/>
            <person name="Liuni S."/>
            <person name="McWilliam S."/>
            <person name="Madan Babu M."/>
            <person name="Madera M."/>
            <person name="Marchionni L."/>
            <person name="Matsuda H."/>
            <person name="Matsuzawa S."/>
            <person name="Miki H."/>
            <person name="Mignone F."/>
            <person name="Miyake S."/>
            <person name="Morris K."/>
            <person name="Mottagui-Tabar S."/>
            <person name="Mulder N."/>
            <person name="Nakano N."/>
            <person name="Nakauchi H."/>
            <person name="Ng P."/>
            <person name="Nilsson R."/>
            <person name="Nishiguchi S."/>
            <person name="Nishikawa S."/>
            <person name="Nori F."/>
            <person name="Ohara O."/>
            <person name="Okazaki Y."/>
            <person name="Orlando V."/>
            <person name="Pang K.C."/>
            <person name="Pavan W.J."/>
            <person name="Pavesi G."/>
            <person name="Pesole G."/>
            <person name="Petrovsky N."/>
            <person name="Piazza S."/>
            <person name="Reed J."/>
            <person name="Reid J.F."/>
            <person name="Ring B.Z."/>
            <person name="Ringwald M."/>
            <person name="Rost B."/>
            <person name="Ruan Y."/>
            <person name="Salzberg S.L."/>
            <person name="Sandelin A."/>
            <person name="Schneider C."/>
            <person name="Schoenbach C."/>
            <person name="Sekiguchi K."/>
            <person name="Semple C.A."/>
            <person name="Seno S."/>
            <person name="Sessa L."/>
            <person name="Sheng Y."/>
            <person name="Shibata Y."/>
            <person name="Shimada H."/>
            <person name="Shimada K."/>
            <person name="Silva D."/>
            <person name="Sinclair B."/>
            <person name="Sperling S."/>
            <person name="Stupka E."/>
            <person name="Sugiura K."/>
            <person name="Sultana R."/>
            <person name="Takenaka Y."/>
            <person name="Taki K."/>
            <person name="Tammoja K."/>
            <person name="Tan S.L."/>
            <person name="Tang S."/>
            <person name="Taylor M.S."/>
            <person name="Tegner J."/>
            <person name="Teichmann S.A."/>
            <person name="Ueda H.R."/>
            <person name="van Nimwegen E."/>
            <person name="Verardo R."/>
            <person name="Wei C.L."/>
            <person name="Yagi K."/>
            <person name="Yamanishi H."/>
            <person name="Zabarovsky E."/>
            <person name="Zhu S."/>
            <person name="Zimmer A."/>
            <person name="Hide W."/>
            <person name="Bult C."/>
            <person name="Grimmond S.M."/>
            <person name="Teasdale R.D."/>
            <person name="Liu E.T."/>
            <person name="Brusic V."/>
            <person name="Quackenbush J."/>
            <person name="Wahlestedt C."/>
            <person name="Mattick J.S."/>
            <person name="Hume D.A."/>
            <person name="Kai C."/>
            <person name="Sasaki D."/>
            <person name="Tomaru Y."/>
            <person name="Fukuda S."/>
            <person name="Kanamori-Katayama M."/>
            <person name="Suzuki M."/>
            <person name="Aoki J."/>
            <person name="Arakawa T."/>
            <person name="Iida J."/>
            <person name="Imamura K."/>
            <person name="Itoh M."/>
            <person name="Kato T."/>
            <person name="Kawaji H."/>
            <person name="Kawagashira N."/>
            <person name="Kawashima T."/>
            <person name="Kojima M."/>
            <person name="Kondo S."/>
            <person name="Konno H."/>
            <person name="Nakano K."/>
            <person name="Ninomiya N."/>
            <person name="Nishio T."/>
            <person name="Okada M."/>
            <person name="Plessy C."/>
            <person name="Shibata K."/>
            <person name="Shiraki T."/>
            <person name="Suzuki S."/>
            <person name="Tagami M."/>
            <person name="Waki K."/>
            <person name="Watahiki A."/>
            <person name="Okamura-Oho Y."/>
            <person name="Suzuki H."/>
            <person name="Kawai J."/>
            <person name="Hayashizaki Y."/>
        </authorList>
    </citation>
    <scope>NUCLEOTIDE SEQUENCE [LARGE SCALE MRNA] OF 1-135</scope>
    <source>
        <strain>C57BL/6J</strain>
        <tissue>Embryonic heart</tissue>
    </source>
</reference>
<reference key="3">
    <citation type="submission" date="2002-01" db="EMBL/GenBank/DDBJ databases">
        <title>Expression of the newly identified Mus musculus talin 2 gene.</title>
        <authorList>
            <person name="Dubois A."/>
            <person name="Albiges-Rizo C."/>
            <person name="Block M."/>
            <person name="Faessler R."/>
        </authorList>
    </citation>
    <scope>NUCLEOTIDE SEQUENCE [MRNA] OF 30-2375</scope>
    <source>
        <tissue>Kidney</tissue>
    </source>
</reference>
<reference key="4">
    <citation type="journal article" date="2008" name="J. Proteome Res.">
        <title>Large-scale identification and evolution indexing of tyrosine phosphorylation sites from murine brain.</title>
        <authorList>
            <person name="Ballif B.A."/>
            <person name="Carey G.R."/>
            <person name="Sunyaev S.R."/>
            <person name="Gygi S.P."/>
        </authorList>
    </citation>
    <scope>PHOSPHORYLATION [LARGE SCALE ANALYSIS] AT TYR-1666</scope>
    <scope>IDENTIFICATION BY MASS SPECTROMETRY [LARGE SCALE ANALYSIS]</scope>
    <source>
        <tissue>Brain</tissue>
    </source>
</reference>
<reference key="5">
    <citation type="journal article" date="2010" name="Cell">
        <title>A tissue-specific atlas of mouse protein phosphorylation and expression.</title>
        <authorList>
            <person name="Huttlin E.L."/>
            <person name="Jedrychowski M.P."/>
            <person name="Elias J.E."/>
            <person name="Goswami T."/>
            <person name="Rad R."/>
            <person name="Beausoleil S.A."/>
            <person name="Villen J."/>
            <person name="Haas W."/>
            <person name="Sowa M.E."/>
            <person name="Gygi S.P."/>
        </authorList>
    </citation>
    <scope>PHOSPHORYLATION [LARGE SCALE ANALYSIS] AT SER-428; SER-450 AND SER-624</scope>
    <scope>IDENTIFICATION BY MASS SPECTROMETRY [LARGE SCALE ANALYSIS]</scope>
    <source>
        <tissue>Brain</tissue>
        <tissue>Brown adipose tissue</tissue>
        <tissue>Heart</tissue>
        <tissue>Kidney</tissue>
        <tissue>Liver</tissue>
        <tissue>Lung</tissue>
        <tissue>Pancreas</tissue>
        <tissue>Testis</tissue>
    </source>
</reference>
<evidence type="ECO:0000250" key="1"/>
<evidence type="ECO:0000250" key="2">
    <source>
        <dbReference type="UniProtKB" id="Q9Y4G6"/>
    </source>
</evidence>
<evidence type="ECO:0000255" key="3">
    <source>
        <dbReference type="PROSITE-ProRule" id="PRU00084"/>
    </source>
</evidence>
<evidence type="ECO:0000255" key="4">
    <source>
        <dbReference type="PROSITE-ProRule" id="PRU00292"/>
    </source>
</evidence>
<evidence type="ECO:0000305" key="5"/>
<evidence type="ECO:0007744" key="6">
    <source>
    </source>
</evidence>
<evidence type="ECO:0007744" key="7">
    <source>
    </source>
</evidence>
<evidence type="ECO:0007829" key="8">
    <source>
        <dbReference type="PDB" id="3G9W"/>
    </source>
</evidence>
<keyword id="KW-0002">3D-structure</keyword>
<keyword id="KW-0965">Cell junction</keyword>
<keyword id="KW-1003">Cell membrane</keyword>
<keyword id="KW-0963">Cytoplasm</keyword>
<keyword id="KW-0206">Cytoskeleton</keyword>
<keyword id="KW-0472">Membrane</keyword>
<keyword id="KW-0597">Phosphoprotein</keyword>
<keyword id="KW-1185">Reference proteome</keyword>
<keyword id="KW-0770">Synapse</keyword>
<proteinExistence type="evidence at protein level"/>
<protein>
    <recommendedName>
        <fullName>Talin-2</fullName>
    </recommendedName>
</protein>
<gene>
    <name type="primary">Tln2</name>
</gene>
<comment type="function">
    <text evidence="1">As a major component of focal adhesion plaques that links integrin to the actin cytoskeleton, may play an important role in cell adhesion. Recruits PIP5K1C to focal adhesion plaques and strongly activates its kinase activity (By similarity).</text>
</comment>
<comment type="subunit">
    <text evidence="2">Interacts directly with PIP5K1C.</text>
</comment>
<comment type="interaction">
    <interactant intactId="EBI-2255655">
        <id>Q71LX4</id>
    </interactant>
    <interactant intactId="EBI-7208579">
        <id>P05556-5</id>
        <label>ITGB1</label>
    </interactant>
    <organismsDiffer>true</organismsDiffer>
    <experiments>3</experiments>
</comment>
<comment type="subcellular location">
    <subcellularLocation>
        <location evidence="2">Cytoplasm</location>
    </subcellularLocation>
    <subcellularLocation>
        <location evidence="2">Cell junction</location>
        <location evidence="2">Focal adhesion</location>
    </subcellularLocation>
    <subcellularLocation>
        <location evidence="2">Synapse</location>
    </subcellularLocation>
    <subcellularLocation>
        <location evidence="2">Cell membrane</location>
        <topology evidence="2">Peripheral membrane protein</topology>
        <orientation evidence="2">Cytoplasmic side</orientation>
    </subcellularLocation>
    <subcellularLocation>
        <location evidence="2">Cytoplasm</location>
        <location evidence="2">Cytoskeleton</location>
    </subcellularLocation>
    <text evidence="2">Focal adhesion plaques and synapses.</text>
</comment>
<comment type="sequence caution" evidence="5">
    <conflict type="erroneous initiation">
        <sequence resource="EMBL-CDS" id="AAQ05019"/>
    </conflict>
    <text>Extended N-terminus.</text>
</comment>
<comment type="sequence caution" evidence="5">
    <conflict type="erroneous initiation">
        <sequence resource="EMBL-CDS" id="BAC34927"/>
    </conflict>
    <text>Extended N-terminus.</text>
</comment>
<accession>Q71LX4</accession>
<accession>E9QM49</accession>
<accession>Q8BWK0</accession>
<dbReference type="EMBL" id="AC107740">
    <property type="status" value="NOT_ANNOTATED_CDS"/>
    <property type="molecule type" value="Genomic_DNA"/>
</dbReference>
<dbReference type="EMBL" id="AC107755">
    <property type="status" value="NOT_ANNOTATED_CDS"/>
    <property type="molecule type" value="Genomic_DNA"/>
</dbReference>
<dbReference type="EMBL" id="AC173343">
    <property type="status" value="NOT_ANNOTATED_CDS"/>
    <property type="molecule type" value="Genomic_DNA"/>
</dbReference>
<dbReference type="EMBL" id="AF467081">
    <property type="protein sequence ID" value="AAQ05019.1"/>
    <property type="status" value="ALT_INIT"/>
    <property type="molecule type" value="mRNA"/>
</dbReference>
<dbReference type="EMBL" id="AK052301">
    <property type="protein sequence ID" value="BAC34927.1"/>
    <property type="status" value="ALT_INIT"/>
    <property type="molecule type" value="mRNA"/>
</dbReference>
<dbReference type="RefSeq" id="NP_001074711.2">
    <property type="nucleotide sequence ID" value="NM_001081242.2"/>
</dbReference>
<dbReference type="PDB" id="3G9W">
    <property type="method" value="X-ray"/>
    <property type="resolution" value="2.16 A"/>
    <property type="chains" value="A/B=198-408"/>
</dbReference>
<dbReference type="PDBsum" id="3G9W"/>
<dbReference type="SMR" id="Q71LX4"/>
<dbReference type="BioGRID" id="214125">
    <property type="interactions" value="10"/>
</dbReference>
<dbReference type="DIP" id="DIP-53098N"/>
<dbReference type="FunCoup" id="Q71LX4">
    <property type="interactions" value="562"/>
</dbReference>
<dbReference type="IntAct" id="Q71LX4">
    <property type="interactions" value="7"/>
</dbReference>
<dbReference type="MINT" id="Q71LX4"/>
<dbReference type="STRING" id="10090.ENSMUSP00000039633"/>
<dbReference type="GlyConnect" id="2751">
    <property type="glycosylation" value="1 N-Linked glycan (1 site)"/>
</dbReference>
<dbReference type="GlyCosmos" id="Q71LX4">
    <property type="glycosylation" value="1 site, 1 glycan"/>
</dbReference>
<dbReference type="GlyGen" id="Q71LX4">
    <property type="glycosylation" value="6 sites, 4 N-linked glycans (3 sites), 1 O-linked glycan (1 site)"/>
</dbReference>
<dbReference type="iPTMnet" id="Q71LX4"/>
<dbReference type="PhosphoSitePlus" id="Q71LX4"/>
<dbReference type="SwissPalm" id="Q71LX4"/>
<dbReference type="jPOST" id="Q71LX4"/>
<dbReference type="PaxDb" id="10090-ENSMUSP00000039633"/>
<dbReference type="PeptideAtlas" id="Q71LX4"/>
<dbReference type="ProteomicsDB" id="260667"/>
<dbReference type="Pumba" id="Q71LX4"/>
<dbReference type="GeneID" id="70549"/>
<dbReference type="KEGG" id="mmu:70549"/>
<dbReference type="AGR" id="MGI:1917799"/>
<dbReference type="CTD" id="83660"/>
<dbReference type="MGI" id="MGI:1917799">
    <property type="gene designation" value="Tln2"/>
</dbReference>
<dbReference type="eggNOG" id="KOG4261">
    <property type="taxonomic scope" value="Eukaryota"/>
</dbReference>
<dbReference type="InParanoid" id="Q71LX4"/>
<dbReference type="BioGRID-ORCS" id="70549">
    <property type="hits" value="3 hits in 81 CRISPR screens"/>
</dbReference>
<dbReference type="CD-CODE" id="CE726F99">
    <property type="entry name" value="Postsynaptic density"/>
</dbReference>
<dbReference type="ChiTaRS" id="Tln2">
    <property type="organism name" value="mouse"/>
</dbReference>
<dbReference type="EvolutionaryTrace" id="Q71LX4"/>
<dbReference type="PRO" id="PR:Q71LX4"/>
<dbReference type="Proteomes" id="UP000000589">
    <property type="component" value="Unplaced"/>
</dbReference>
<dbReference type="RNAct" id="Q71LX4">
    <property type="molecule type" value="protein"/>
</dbReference>
<dbReference type="GO" id="GO:0005737">
    <property type="term" value="C:cytoplasm"/>
    <property type="evidence" value="ECO:0007669"/>
    <property type="project" value="UniProtKB-SubCell"/>
</dbReference>
<dbReference type="GO" id="GO:0005856">
    <property type="term" value="C:cytoskeleton"/>
    <property type="evidence" value="ECO:0007669"/>
    <property type="project" value="UniProtKB-SubCell"/>
</dbReference>
<dbReference type="GO" id="GO:0005916">
    <property type="term" value="C:fascia adherens"/>
    <property type="evidence" value="ECO:0000314"/>
    <property type="project" value="MGI"/>
</dbReference>
<dbReference type="GO" id="GO:0005925">
    <property type="term" value="C:focal adhesion"/>
    <property type="evidence" value="ECO:0007669"/>
    <property type="project" value="UniProtKB-SubCell"/>
</dbReference>
<dbReference type="GO" id="GO:0005886">
    <property type="term" value="C:plasma membrane"/>
    <property type="evidence" value="ECO:0007669"/>
    <property type="project" value="UniProtKB-SubCell"/>
</dbReference>
<dbReference type="GO" id="GO:0001726">
    <property type="term" value="C:ruffle"/>
    <property type="evidence" value="ECO:0007669"/>
    <property type="project" value="InterPro"/>
</dbReference>
<dbReference type="GO" id="GO:0045202">
    <property type="term" value="C:synapse"/>
    <property type="evidence" value="ECO:0000314"/>
    <property type="project" value="MGI"/>
</dbReference>
<dbReference type="GO" id="GO:0051015">
    <property type="term" value="F:actin filament binding"/>
    <property type="evidence" value="ECO:0007669"/>
    <property type="project" value="InterPro"/>
</dbReference>
<dbReference type="GO" id="GO:0005200">
    <property type="term" value="F:structural constituent of cytoskeleton"/>
    <property type="evidence" value="ECO:0007669"/>
    <property type="project" value="InterPro"/>
</dbReference>
<dbReference type="GO" id="GO:0007155">
    <property type="term" value="P:cell adhesion"/>
    <property type="evidence" value="ECO:0007669"/>
    <property type="project" value="InterPro"/>
</dbReference>
<dbReference type="CDD" id="cd14473">
    <property type="entry name" value="FERM_B-lobe"/>
    <property type="match status" value="1"/>
</dbReference>
<dbReference type="CDD" id="cd10569">
    <property type="entry name" value="FERM_C_Talin"/>
    <property type="match status" value="1"/>
</dbReference>
<dbReference type="CDD" id="cd17172">
    <property type="entry name" value="FERM_F0_TLN2"/>
    <property type="match status" value="1"/>
</dbReference>
<dbReference type="CDD" id="cd17174">
    <property type="entry name" value="FERM_F1_TLN2"/>
    <property type="match status" value="1"/>
</dbReference>
<dbReference type="CDD" id="cd12150">
    <property type="entry name" value="talin-RS"/>
    <property type="match status" value="1"/>
</dbReference>
<dbReference type="FunFam" id="1.20.120.230:FF:000005">
    <property type="entry name" value="Talin 1"/>
    <property type="match status" value="1"/>
</dbReference>
<dbReference type="FunFam" id="3.10.20.90:FF:000066">
    <property type="entry name" value="Talin 1"/>
    <property type="match status" value="1"/>
</dbReference>
<dbReference type="FunFam" id="1.20.120.230:FF:000002">
    <property type="entry name" value="Talin 2"/>
    <property type="match status" value="1"/>
</dbReference>
<dbReference type="FunFam" id="1.20.120.230:FF:000003">
    <property type="entry name" value="Talin 2"/>
    <property type="match status" value="1"/>
</dbReference>
<dbReference type="FunFam" id="1.20.120.230:FF:000004">
    <property type="entry name" value="Talin 2"/>
    <property type="match status" value="1"/>
</dbReference>
<dbReference type="FunFam" id="1.20.1410.10:FF:000001">
    <property type="entry name" value="Talin 2"/>
    <property type="match status" value="1"/>
</dbReference>
<dbReference type="FunFam" id="1.20.1420.10:FF:000001">
    <property type="entry name" value="Talin 2"/>
    <property type="match status" value="1"/>
</dbReference>
<dbReference type="FunFam" id="1.20.1420.10:FF:000002">
    <property type="entry name" value="Talin 2"/>
    <property type="match status" value="1"/>
</dbReference>
<dbReference type="FunFam" id="1.20.1420.10:FF:000004">
    <property type="entry name" value="Talin 2"/>
    <property type="match status" value="1"/>
</dbReference>
<dbReference type="FunFam" id="1.20.1420.10:FF:000005">
    <property type="entry name" value="Talin 2"/>
    <property type="match status" value="1"/>
</dbReference>
<dbReference type="FunFam" id="1.20.1420.10:FF:000006">
    <property type="entry name" value="Talin 2"/>
    <property type="match status" value="1"/>
</dbReference>
<dbReference type="FunFam" id="1.20.1420.10:FF:000007">
    <property type="entry name" value="Talin 2"/>
    <property type="match status" value="1"/>
</dbReference>
<dbReference type="FunFam" id="1.20.80.10:FF:000007">
    <property type="entry name" value="Talin 2"/>
    <property type="match status" value="1"/>
</dbReference>
<dbReference type="FunFam" id="2.30.29.30:FF:000028">
    <property type="entry name" value="Talin 2"/>
    <property type="match status" value="1"/>
</dbReference>
<dbReference type="FunFam" id="3.10.20.90:FF:000028">
    <property type="entry name" value="Talin 2"/>
    <property type="match status" value="1"/>
</dbReference>
<dbReference type="Gene3D" id="1.20.80.10">
    <property type="match status" value="1"/>
</dbReference>
<dbReference type="Gene3D" id="1.20.120.230">
    <property type="entry name" value="Alpha-catenin/vinculin-like"/>
    <property type="match status" value="5"/>
</dbReference>
<dbReference type="Gene3D" id="1.20.1410.10">
    <property type="entry name" value="I/LWEQ domain"/>
    <property type="match status" value="1"/>
</dbReference>
<dbReference type="Gene3D" id="3.10.20.90">
    <property type="entry name" value="Phosphatidylinositol 3-kinase Catalytic Subunit, Chain A, domain 1"/>
    <property type="match status" value="2"/>
</dbReference>
<dbReference type="Gene3D" id="2.30.29.30">
    <property type="entry name" value="Pleckstrin-homology domain (PH domain)/Phosphotyrosine-binding domain (PTB)"/>
    <property type="match status" value="1"/>
</dbReference>
<dbReference type="Gene3D" id="1.20.1420.10">
    <property type="entry name" value="Talin, central domain"/>
    <property type="match status" value="7"/>
</dbReference>
<dbReference type="InterPro" id="IPR036723">
    <property type="entry name" value="Alpha-catenin/vinculin-like_sf"/>
</dbReference>
<dbReference type="InterPro" id="IPR019749">
    <property type="entry name" value="Band_41_domain"/>
</dbReference>
<dbReference type="InterPro" id="IPR014352">
    <property type="entry name" value="FERM/acyl-CoA-bd_prot_sf"/>
</dbReference>
<dbReference type="InterPro" id="IPR035963">
    <property type="entry name" value="FERM_2"/>
</dbReference>
<dbReference type="InterPro" id="IPR019748">
    <property type="entry name" value="FERM_central"/>
</dbReference>
<dbReference type="InterPro" id="IPR019747">
    <property type="entry name" value="FERM_CS"/>
</dbReference>
<dbReference type="InterPro" id="IPR000299">
    <property type="entry name" value="FERM_domain"/>
</dbReference>
<dbReference type="InterPro" id="IPR032425">
    <property type="entry name" value="FERM_f0"/>
</dbReference>
<dbReference type="InterPro" id="IPR018979">
    <property type="entry name" value="FERM_N"/>
</dbReference>
<dbReference type="InterPro" id="IPR035964">
    <property type="entry name" value="I/LWEQ_dom_sf"/>
</dbReference>
<dbReference type="InterPro" id="IPR002558">
    <property type="entry name" value="ILWEQ_dom"/>
</dbReference>
<dbReference type="InterPro" id="IPR002404">
    <property type="entry name" value="IRS_PTB"/>
</dbReference>
<dbReference type="InterPro" id="IPR011993">
    <property type="entry name" value="PH-like_dom_sf"/>
</dbReference>
<dbReference type="InterPro" id="IPR037438">
    <property type="entry name" value="Talin1/2-RS"/>
</dbReference>
<dbReference type="InterPro" id="IPR015224">
    <property type="entry name" value="Talin_cent"/>
</dbReference>
<dbReference type="InterPro" id="IPR036476">
    <property type="entry name" value="Talin_cent_sf"/>
</dbReference>
<dbReference type="InterPro" id="IPR054082">
    <property type="entry name" value="Talin_IBS2B"/>
</dbReference>
<dbReference type="InterPro" id="IPR049108">
    <property type="entry name" value="Talin_R4"/>
</dbReference>
<dbReference type="InterPro" id="IPR054060">
    <property type="entry name" value="TLN1-like_RS"/>
</dbReference>
<dbReference type="InterPro" id="IPR029071">
    <property type="entry name" value="Ubiquitin-like_domsf"/>
</dbReference>
<dbReference type="InterPro" id="IPR015009">
    <property type="entry name" value="Vinculin-bd_dom"/>
</dbReference>
<dbReference type="PANTHER" id="PTHR19981">
    <property type="entry name" value="TALIN"/>
    <property type="match status" value="1"/>
</dbReference>
<dbReference type="PANTHER" id="PTHR19981:SF34">
    <property type="entry name" value="TALIN-2"/>
    <property type="match status" value="1"/>
</dbReference>
<dbReference type="Pfam" id="PF16511">
    <property type="entry name" value="FERM_f0"/>
    <property type="match status" value="1"/>
</dbReference>
<dbReference type="Pfam" id="PF00373">
    <property type="entry name" value="FERM_M"/>
    <property type="match status" value="1"/>
</dbReference>
<dbReference type="Pfam" id="PF09379">
    <property type="entry name" value="FERM_N"/>
    <property type="match status" value="1"/>
</dbReference>
<dbReference type="Pfam" id="PF01608">
    <property type="entry name" value="I_LWEQ"/>
    <property type="match status" value="2"/>
</dbReference>
<dbReference type="Pfam" id="PF02174">
    <property type="entry name" value="IRS"/>
    <property type="match status" value="1"/>
</dbReference>
<dbReference type="Pfam" id="PF21896">
    <property type="entry name" value="Talin_IBS2B"/>
    <property type="match status" value="3"/>
</dbReference>
<dbReference type="Pfam" id="PF09141">
    <property type="entry name" value="Talin_middle"/>
    <property type="match status" value="1"/>
</dbReference>
<dbReference type="Pfam" id="PF21692">
    <property type="entry name" value="Talin_R4"/>
    <property type="match status" value="1"/>
</dbReference>
<dbReference type="Pfam" id="PF25177">
    <property type="entry name" value="Talin_VBS2"/>
    <property type="match status" value="1"/>
</dbReference>
<dbReference type="Pfam" id="PF21865">
    <property type="entry name" value="TLN1-like_RS"/>
    <property type="match status" value="3"/>
</dbReference>
<dbReference type="Pfam" id="PF08913">
    <property type="entry name" value="VBS"/>
    <property type="match status" value="1"/>
</dbReference>
<dbReference type="SMART" id="SM00295">
    <property type="entry name" value="B41"/>
    <property type="match status" value="1"/>
</dbReference>
<dbReference type="SMART" id="SM00307">
    <property type="entry name" value="ILWEQ"/>
    <property type="match status" value="1"/>
</dbReference>
<dbReference type="SMART" id="SM01244">
    <property type="entry name" value="IRS"/>
    <property type="match status" value="1"/>
</dbReference>
<dbReference type="SUPFAM" id="SSF109880">
    <property type="entry name" value="A middle domain of Talin 1"/>
    <property type="match status" value="1"/>
</dbReference>
<dbReference type="SUPFAM" id="SSF47220">
    <property type="entry name" value="alpha-catenin/vinculin-like"/>
    <property type="match status" value="4"/>
</dbReference>
<dbReference type="SUPFAM" id="SSF109885">
    <property type="entry name" value="I/LWEQ domain"/>
    <property type="match status" value="5"/>
</dbReference>
<dbReference type="SUPFAM" id="SSF50729">
    <property type="entry name" value="PH domain-like"/>
    <property type="match status" value="1"/>
</dbReference>
<dbReference type="SUPFAM" id="SSF47031">
    <property type="entry name" value="Second domain of FERM"/>
    <property type="match status" value="1"/>
</dbReference>
<dbReference type="SUPFAM" id="SSF54236">
    <property type="entry name" value="Ubiquitin-like"/>
    <property type="match status" value="1"/>
</dbReference>
<dbReference type="PROSITE" id="PS00661">
    <property type="entry name" value="FERM_2"/>
    <property type="match status" value="1"/>
</dbReference>
<dbReference type="PROSITE" id="PS50057">
    <property type="entry name" value="FERM_3"/>
    <property type="match status" value="1"/>
</dbReference>
<dbReference type="PROSITE" id="PS50945">
    <property type="entry name" value="I_LWEQ"/>
    <property type="match status" value="1"/>
</dbReference>
<name>TLN2_MOUSE</name>
<organism>
    <name type="scientific">Mus musculus</name>
    <name type="common">Mouse</name>
    <dbReference type="NCBI Taxonomy" id="10090"/>
    <lineage>
        <taxon>Eukaryota</taxon>
        <taxon>Metazoa</taxon>
        <taxon>Chordata</taxon>
        <taxon>Craniata</taxon>
        <taxon>Vertebrata</taxon>
        <taxon>Euteleostomi</taxon>
        <taxon>Mammalia</taxon>
        <taxon>Eutheria</taxon>
        <taxon>Euarchontoglires</taxon>
        <taxon>Glires</taxon>
        <taxon>Rodentia</taxon>
        <taxon>Myomorpha</taxon>
        <taxon>Muroidea</taxon>
        <taxon>Muridae</taxon>
        <taxon>Murinae</taxon>
        <taxon>Mus</taxon>
        <taxon>Mus</taxon>
    </lineage>
</organism>